<feature type="chain" id="PRO_0000359914" description="Uncharacterized ABC transporter permease YvcS">
    <location>
        <begin position="1"/>
        <end position="646"/>
    </location>
</feature>
<feature type="transmembrane region" description="Helical" evidence="1">
    <location>
        <begin position="20"/>
        <end position="40"/>
    </location>
</feature>
<feature type="transmembrane region" description="Helical" evidence="1">
    <location>
        <begin position="54"/>
        <end position="74"/>
    </location>
</feature>
<feature type="transmembrane region" description="Helical" evidence="1">
    <location>
        <begin position="115"/>
        <end position="135"/>
    </location>
</feature>
<feature type="transmembrane region" description="Helical" evidence="1">
    <location>
        <begin position="154"/>
        <end position="174"/>
    </location>
</feature>
<feature type="transmembrane region" description="Helical" evidence="1">
    <location>
        <begin position="203"/>
        <end position="223"/>
    </location>
</feature>
<feature type="transmembrane region" description="Helical" evidence="1">
    <location>
        <begin position="232"/>
        <end position="252"/>
    </location>
</feature>
<feature type="transmembrane region" description="Helical" evidence="1">
    <location>
        <begin position="285"/>
        <end position="305"/>
    </location>
</feature>
<feature type="transmembrane region" description="Helical" evidence="1">
    <location>
        <begin position="523"/>
        <end position="543"/>
    </location>
</feature>
<feature type="transmembrane region" description="Helical" evidence="1">
    <location>
        <begin position="582"/>
        <end position="602"/>
    </location>
</feature>
<feature type="transmembrane region" description="Helical" evidence="1">
    <location>
        <begin position="613"/>
        <end position="633"/>
    </location>
</feature>
<protein>
    <recommendedName>
        <fullName>Uncharacterized ABC transporter permease YvcS</fullName>
    </recommendedName>
</protein>
<sequence>MNLRTIARKNILGNLQRYVAYFLSCVFAVSVFFVFTSFIFHPDVNEDNIYGGSLVKTCLSAALVVIIVFCIFFITYSNSAFLQARKKEFGLLTLFGTSKQQLRKMIYYEQSLISLAAIAAGIGAGLLFSKLFFMIMTWMLSVKVPISFAIVPKAFVMTIAGFLILFQTLLILSLGRIRKLEIIELIKSAKKPKSLPVYSKWLTVLSLLCLGSGYYLSATANAIDMMFRVFPILILVLIGTYFFFTQSSVAFFRMLYRKKHSFYKGTNIIVRSNMIFRLKDHARMLFLTSVITAVILTATGVIYMFYSDLQRQEEQSIPQSVSWVEKDASRFQVMKPETAENTLKKAHAVITYKVDATGIPVTFQSDLPYGNKKMEAEALLISEKVYNQVAKEKGFPVIHLQENEAFINVSFQMMVKDTFGEGETAAFHMKSGKTLSYVMKKQQNKGILMSVDGVSRLLVVSEKSFDSLSQDVPLKEQMRMVGYELEHWQETVDVSEKLENMVPKEHTSDFQTRAPSYQIVKQGVALMLFIGLFVSVLFFIVQGSMLYLRMFTEIEDTGVQVLALKRIGVTDKEIHSILGKQIGFLFFIPFIAGTIHAGFAYAALSNMLNSNLFLEAVIVIFIYFVFQALYYIVTRHIYKRAVLQRM</sequence>
<dbReference type="EMBL" id="Z94043">
    <property type="protein sequence ID" value="CAB08065.1"/>
    <property type="molecule type" value="Genomic_DNA"/>
</dbReference>
<dbReference type="EMBL" id="AL009126">
    <property type="protein sequence ID" value="CAB15474.1"/>
    <property type="molecule type" value="Genomic_DNA"/>
</dbReference>
<dbReference type="PIR" id="G70032">
    <property type="entry name" value="G70032"/>
</dbReference>
<dbReference type="RefSeq" id="WP_003243432.1">
    <property type="nucleotide sequence ID" value="NZ_OZ025638.1"/>
</dbReference>
<dbReference type="SMR" id="O06981"/>
<dbReference type="FunCoup" id="O06981">
    <property type="interactions" value="52"/>
</dbReference>
<dbReference type="STRING" id="224308.BSU34690"/>
<dbReference type="TCDB" id="3.A.1.134.5">
    <property type="family name" value="the atp-binding cassette (abc) superfamily"/>
</dbReference>
<dbReference type="PaxDb" id="224308-BSU34690"/>
<dbReference type="EnsemblBacteria" id="CAB15474">
    <property type="protein sequence ID" value="CAB15474"/>
    <property type="gene ID" value="BSU_34690"/>
</dbReference>
<dbReference type="GeneID" id="938473"/>
<dbReference type="KEGG" id="bsu:BSU34690"/>
<dbReference type="PATRIC" id="fig|224308.179.peg.3756"/>
<dbReference type="eggNOG" id="COG0577">
    <property type="taxonomic scope" value="Bacteria"/>
</dbReference>
<dbReference type="InParanoid" id="O06981"/>
<dbReference type="OrthoDB" id="1937696at2"/>
<dbReference type="PhylomeDB" id="O06981"/>
<dbReference type="BioCyc" id="BSUB:BSU34690-MONOMER"/>
<dbReference type="Proteomes" id="UP000001570">
    <property type="component" value="Chromosome"/>
</dbReference>
<dbReference type="GO" id="GO:0005886">
    <property type="term" value="C:plasma membrane"/>
    <property type="evidence" value="ECO:0007669"/>
    <property type="project" value="UniProtKB-SubCell"/>
</dbReference>
<dbReference type="GO" id="GO:0055085">
    <property type="term" value="P:transmembrane transport"/>
    <property type="evidence" value="ECO:0007669"/>
    <property type="project" value="InterPro"/>
</dbReference>
<dbReference type="InterPro" id="IPR052536">
    <property type="entry name" value="ABC-4_Integral_Memb_Prot"/>
</dbReference>
<dbReference type="InterPro" id="IPR003838">
    <property type="entry name" value="ABC3_permease_C"/>
</dbReference>
<dbReference type="InterPro" id="IPR027022">
    <property type="entry name" value="ABC_permease_BceB-typ"/>
</dbReference>
<dbReference type="PANTHER" id="PTHR46795:SF1">
    <property type="entry name" value="ABC TRANSPORTER PERMEASE PROTEIN"/>
    <property type="match status" value="1"/>
</dbReference>
<dbReference type="PANTHER" id="PTHR46795">
    <property type="entry name" value="ABC TRANSPORTER PERMEASE-RELATED-RELATED"/>
    <property type="match status" value="1"/>
</dbReference>
<dbReference type="Pfam" id="PF02687">
    <property type="entry name" value="FtsX"/>
    <property type="match status" value="1"/>
</dbReference>
<dbReference type="PIRSF" id="PIRSF018968">
    <property type="entry name" value="ABC_permease_BceB"/>
    <property type="match status" value="1"/>
</dbReference>
<proteinExistence type="inferred from homology"/>
<accession>O06981</accession>
<accession>Q795G3</accession>
<gene>
    <name type="primary">yvcS</name>
    <name type="ordered locus">BSU34690</name>
</gene>
<comment type="subcellular location">
    <subcellularLocation>
        <location evidence="2">Cell membrane</location>
        <topology evidence="2">Multi-pass membrane protein</topology>
    </subcellularLocation>
</comment>
<comment type="similarity">
    <text evidence="2">Belongs to the ABC-4 integral membrane protein family.</text>
</comment>
<organism>
    <name type="scientific">Bacillus subtilis (strain 168)</name>
    <dbReference type="NCBI Taxonomy" id="224308"/>
    <lineage>
        <taxon>Bacteria</taxon>
        <taxon>Bacillati</taxon>
        <taxon>Bacillota</taxon>
        <taxon>Bacilli</taxon>
        <taxon>Bacillales</taxon>
        <taxon>Bacillaceae</taxon>
        <taxon>Bacillus</taxon>
    </lineage>
</organism>
<name>YVCS_BACSU</name>
<keyword id="KW-1003">Cell membrane</keyword>
<keyword id="KW-0472">Membrane</keyword>
<keyword id="KW-1185">Reference proteome</keyword>
<keyword id="KW-0812">Transmembrane</keyword>
<keyword id="KW-1133">Transmembrane helix</keyword>
<keyword id="KW-0813">Transport</keyword>
<evidence type="ECO:0000255" key="1"/>
<evidence type="ECO:0000305" key="2"/>
<reference key="1">
    <citation type="submission" date="1997-04" db="EMBL/GenBank/DDBJ databases">
        <authorList>
            <person name="Denizot F."/>
        </authorList>
    </citation>
    <scope>NUCLEOTIDE SEQUENCE [GENOMIC DNA]</scope>
    <source>
        <strain>168</strain>
    </source>
</reference>
<reference key="2">
    <citation type="journal article" date="1997" name="Nature">
        <title>The complete genome sequence of the Gram-positive bacterium Bacillus subtilis.</title>
        <authorList>
            <person name="Kunst F."/>
            <person name="Ogasawara N."/>
            <person name="Moszer I."/>
            <person name="Albertini A.M."/>
            <person name="Alloni G."/>
            <person name="Azevedo V."/>
            <person name="Bertero M.G."/>
            <person name="Bessieres P."/>
            <person name="Bolotin A."/>
            <person name="Borchert S."/>
            <person name="Borriss R."/>
            <person name="Boursier L."/>
            <person name="Brans A."/>
            <person name="Braun M."/>
            <person name="Brignell S.C."/>
            <person name="Bron S."/>
            <person name="Brouillet S."/>
            <person name="Bruschi C.V."/>
            <person name="Caldwell B."/>
            <person name="Capuano V."/>
            <person name="Carter N.M."/>
            <person name="Choi S.-K."/>
            <person name="Codani J.-J."/>
            <person name="Connerton I.F."/>
            <person name="Cummings N.J."/>
            <person name="Daniel R.A."/>
            <person name="Denizot F."/>
            <person name="Devine K.M."/>
            <person name="Duesterhoeft A."/>
            <person name="Ehrlich S.D."/>
            <person name="Emmerson P.T."/>
            <person name="Entian K.-D."/>
            <person name="Errington J."/>
            <person name="Fabret C."/>
            <person name="Ferrari E."/>
            <person name="Foulger D."/>
            <person name="Fritz C."/>
            <person name="Fujita M."/>
            <person name="Fujita Y."/>
            <person name="Fuma S."/>
            <person name="Galizzi A."/>
            <person name="Galleron N."/>
            <person name="Ghim S.-Y."/>
            <person name="Glaser P."/>
            <person name="Goffeau A."/>
            <person name="Golightly E.J."/>
            <person name="Grandi G."/>
            <person name="Guiseppi G."/>
            <person name="Guy B.J."/>
            <person name="Haga K."/>
            <person name="Haiech J."/>
            <person name="Harwood C.R."/>
            <person name="Henaut A."/>
            <person name="Hilbert H."/>
            <person name="Holsappel S."/>
            <person name="Hosono S."/>
            <person name="Hullo M.-F."/>
            <person name="Itaya M."/>
            <person name="Jones L.-M."/>
            <person name="Joris B."/>
            <person name="Karamata D."/>
            <person name="Kasahara Y."/>
            <person name="Klaerr-Blanchard M."/>
            <person name="Klein C."/>
            <person name="Kobayashi Y."/>
            <person name="Koetter P."/>
            <person name="Koningstein G."/>
            <person name="Krogh S."/>
            <person name="Kumano M."/>
            <person name="Kurita K."/>
            <person name="Lapidus A."/>
            <person name="Lardinois S."/>
            <person name="Lauber J."/>
            <person name="Lazarevic V."/>
            <person name="Lee S.-M."/>
            <person name="Levine A."/>
            <person name="Liu H."/>
            <person name="Masuda S."/>
            <person name="Mauel C."/>
            <person name="Medigue C."/>
            <person name="Medina N."/>
            <person name="Mellado R.P."/>
            <person name="Mizuno M."/>
            <person name="Moestl D."/>
            <person name="Nakai S."/>
            <person name="Noback M."/>
            <person name="Noone D."/>
            <person name="O'Reilly M."/>
            <person name="Ogawa K."/>
            <person name="Ogiwara A."/>
            <person name="Oudega B."/>
            <person name="Park S.-H."/>
            <person name="Parro V."/>
            <person name="Pohl T.M."/>
            <person name="Portetelle D."/>
            <person name="Porwollik S."/>
            <person name="Prescott A.M."/>
            <person name="Presecan E."/>
            <person name="Pujic P."/>
            <person name="Purnelle B."/>
            <person name="Rapoport G."/>
            <person name="Rey M."/>
            <person name="Reynolds S."/>
            <person name="Rieger M."/>
            <person name="Rivolta C."/>
            <person name="Rocha E."/>
            <person name="Roche B."/>
            <person name="Rose M."/>
            <person name="Sadaie Y."/>
            <person name="Sato T."/>
            <person name="Scanlan E."/>
            <person name="Schleich S."/>
            <person name="Schroeter R."/>
            <person name="Scoffone F."/>
            <person name="Sekiguchi J."/>
            <person name="Sekowska A."/>
            <person name="Seror S.J."/>
            <person name="Serror P."/>
            <person name="Shin B.-S."/>
            <person name="Soldo B."/>
            <person name="Sorokin A."/>
            <person name="Tacconi E."/>
            <person name="Takagi T."/>
            <person name="Takahashi H."/>
            <person name="Takemaru K."/>
            <person name="Takeuchi M."/>
            <person name="Tamakoshi A."/>
            <person name="Tanaka T."/>
            <person name="Terpstra P."/>
            <person name="Tognoni A."/>
            <person name="Tosato V."/>
            <person name="Uchiyama S."/>
            <person name="Vandenbol M."/>
            <person name="Vannier F."/>
            <person name="Vassarotti A."/>
            <person name="Viari A."/>
            <person name="Wambutt R."/>
            <person name="Wedler E."/>
            <person name="Wedler H."/>
            <person name="Weitzenegger T."/>
            <person name="Winters P."/>
            <person name="Wipat A."/>
            <person name="Yamamoto H."/>
            <person name="Yamane K."/>
            <person name="Yasumoto K."/>
            <person name="Yata K."/>
            <person name="Yoshida K."/>
            <person name="Yoshikawa H.-F."/>
            <person name="Zumstein E."/>
            <person name="Yoshikawa H."/>
            <person name="Danchin A."/>
        </authorList>
    </citation>
    <scope>NUCLEOTIDE SEQUENCE [LARGE SCALE GENOMIC DNA]</scope>
    <source>
        <strain>168</strain>
    </source>
</reference>